<dbReference type="EC" id="2.1.1.77" evidence="1"/>
<dbReference type="EMBL" id="CP001358">
    <property type="protein sequence ID" value="ACL49094.1"/>
    <property type="molecule type" value="Genomic_DNA"/>
</dbReference>
<dbReference type="SMR" id="B8J017"/>
<dbReference type="STRING" id="525146.Ddes_1190"/>
<dbReference type="KEGG" id="dds:Ddes_1190"/>
<dbReference type="eggNOG" id="COG2518">
    <property type="taxonomic scope" value="Bacteria"/>
</dbReference>
<dbReference type="HOGENOM" id="CLU_055432_2_0_7"/>
<dbReference type="GO" id="GO:0005737">
    <property type="term" value="C:cytoplasm"/>
    <property type="evidence" value="ECO:0007669"/>
    <property type="project" value="UniProtKB-SubCell"/>
</dbReference>
<dbReference type="GO" id="GO:0004719">
    <property type="term" value="F:protein-L-isoaspartate (D-aspartate) O-methyltransferase activity"/>
    <property type="evidence" value="ECO:0007669"/>
    <property type="project" value="UniProtKB-UniRule"/>
</dbReference>
<dbReference type="GO" id="GO:0032259">
    <property type="term" value="P:methylation"/>
    <property type="evidence" value="ECO:0007669"/>
    <property type="project" value="UniProtKB-KW"/>
</dbReference>
<dbReference type="GO" id="GO:0036211">
    <property type="term" value="P:protein modification process"/>
    <property type="evidence" value="ECO:0007669"/>
    <property type="project" value="UniProtKB-UniRule"/>
</dbReference>
<dbReference type="GO" id="GO:0030091">
    <property type="term" value="P:protein repair"/>
    <property type="evidence" value="ECO:0007669"/>
    <property type="project" value="UniProtKB-UniRule"/>
</dbReference>
<dbReference type="CDD" id="cd02440">
    <property type="entry name" value="AdoMet_MTases"/>
    <property type="match status" value="1"/>
</dbReference>
<dbReference type="FunFam" id="3.40.50.150:FF:000010">
    <property type="entry name" value="Protein-L-isoaspartate O-methyltransferase"/>
    <property type="match status" value="1"/>
</dbReference>
<dbReference type="Gene3D" id="3.40.50.150">
    <property type="entry name" value="Vaccinia Virus protein VP39"/>
    <property type="match status" value="1"/>
</dbReference>
<dbReference type="HAMAP" id="MF_00090">
    <property type="entry name" value="PIMT"/>
    <property type="match status" value="1"/>
</dbReference>
<dbReference type="InterPro" id="IPR000682">
    <property type="entry name" value="PCMT"/>
</dbReference>
<dbReference type="InterPro" id="IPR029063">
    <property type="entry name" value="SAM-dependent_MTases_sf"/>
</dbReference>
<dbReference type="NCBIfam" id="TIGR00080">
    <property type="entry name" value="pimt"/>
    <property type="match status" value="1"/>
</dbReference>
<dbReference type="NCBIfam" id="NF001453">
    <property type="entry name" value="PRK00312.1"/>
    <property type="match status" value="1"/>
</dbReference>
<dbReference type="PANTHER" id="PTHR11579">
    <property type="entry name" value="PROTEIN-L-ISOASPARTATE O-METHYLTRANSFERASE"/>
    <property type="match status" value="1"/>
</dbReference>
<dbReference type="PANTHER" id="PTHR11579:SF0">
    <property type="entry name" value="PROTEIN-L-ISOASPARTATE(D-ASPARTATE) O-METHYLTRANSFERASE"/>
    <property type="match status" value="1"/>
</dbReference>
<dbReference type="Pfam" id="PF01135">
    <property type="entry name" value="PCMT"/>
    <property type="match status" value="1"/>
</dbReference>
<dbReference type="SUPFAM" id="SSF53335">
    <property type="entry name" value="S-adenosyl-L-methionine-dependent methyltransferases"/>
    <property type="match status" value="1"/>
</dbReference>
<protein>
    <recommendedName>
        <fullName evidence="1">Protein-L-isoaspartate O-methyltransferase</fullName>
        <ecNumber evidence="1">2.1.1.77</ecNumber>
    </recommendedName>
    <alternativeName>
        <fullName evidence="1">L-isoaspartyl protein carboxyl methyltransferase</fullName>
    </alternativeName>
    <alternativeName>
        <fullName evidence="1">Protein L-isoaspartyl methyltransferase</fullName>
    </alternativeName>
    <alternativeName>
        <fullName evidence="1">Protein-beta-aspartate methyltransferase</fullName>
        <shortName evidence="1">PIMT</shortName>
    </alternativeName>
</protein>
<name>PIMT_DESDA</name>
<sequence>MVDPKRLRRRMVREQLEARGINDAEVLAAMSAVPRHLFVQEALRAQAYEDTPLPIGYGQTISQPYVVALMSQLLEVRRGMRVLEIGTGSGYQAAVLATMGCTVFTVERLRELYQDTGNLLRQLGLRGVHMQRRDGTLGMPEAAPFDRIIVTAGGPEVPRPLTDQLDEGGILLIPVGPRPRAQRLMRFRKEQGRMTGEDLGPAIFVDLVGDHGW</sequence>
<proteinExistence type="inferred from homology"/>
<reference key="1">
    <citation type="submission" date="2009-01" db="EMBL/GenBank/DDBJ databases">
        <title>Complete sequence of Desulfovibrio desulfuricans subsp. desulfuricans str. ATCC 27774.</title>
        <authorList>
            <consortium name="US DOE Joint Genome Institute"/>
            <person name="Lucas S."/>
            <person name="Copeland A."/>
            <person name="Lapidus A."/>
            <person name="Glavina del Rio T."/>
            <person name="Tice H."/>
            <person name="Bruce D."/>
            <person name="Goodwin L."/>
            <person name="Pitluck S."/>
            <person name="Sims D."/>
            <person name="Lu M."/>
            <person name="Kiss H."/>
            <person name="Meineke L."/>
            <person name="Brettin T."/>
            <person name="Detter J.C."/>
            <person name="Han C."/>
            <person name="Larimer F."/>
            <person name="Land M."/>
            <person name="Hauser L."/>
            <person name="Kyrpides N."/>
            <person name="Ovchinnikova G."/>
            <person name="Hazen T.C."/>
        </authorList>
    </citation>
    <scope>NUCLEOTIDE SEQUENCE [LARGE SCALE GENOMIC DNA]</scope>
    <source>
        <strain>ATCC 27774 / DSM 6949 / MB</strain>
    </source>
</reference>
<organism>
    <name type="scientific">Desulfovibrio desulfuricans (strain ATCC 27774 / DSM 6949 / MB)</name>
    <dbReference type="NCBI Taxonomy" id="525146"/>
    <lineage>
        <taxon>Bacteria</taxon>
        <taxon>Pseudomonadati</taxon>
        <taxon>Thermodesulfobacteriota</taxon>
        <taxon>Desulfovibrionia</taxon>
        <taxon>Desulfovibrionales</taxon>
        <taxon>Desulfovibrionaceae</taxon>
        <taxon>Desulfovibrio</taxon>
    </lineage>
</organism>
<comment type="function">
    <text evidence="1">Catalyzes the methyl esterification of L-isoaspartyl residues in peptides and proteins that result from spontaneous decomposition of normal L-aspartyl and L-asparaginyl residues. It plays a role in the repair and/or degradation of damaged proteins.</text>
</comment>
<comment type="catalytic activity">
    <reaction evidence="1">
        <text>[protein]-L-isoaspartate + S-adenosyl-L-methionine = [protein]-L-isoaspartate alpha-methyl ester + S-adenosyl-L-homocysteine</text>
        <dbReference type="Rhea" id="RHEA:12705"/>
        <dbReference type="Rhea" id="RHEA-COMP:12143"/>
        <dbReference type="Rhea" id="RHEA-COMP:12144"/>
        <dbReference type="ChEBI" id="CHEBI:57856"/>
        <dbReference type="ChEBI" id="CHEBI:59789"/>
        <dbReference type="ChEBI" id="CHEBI:90596"/>
        <dbReference type="ChEBI" id="CHEBI:90598"/>
        <dbReference type="EC" id="2.1.1.77"/>
    </reaction>
</comment>
<comment type="subcellular location">
    <subcellularLocation>
        <location evidence="1">Cytoplasm</location>
    </subcellularLocation>
</comment>
<comment type="similarity">
    <text evidence="1">Belongs to the methyltransferase superfamily. L-isoaspartyl/D-aspartyl protein methyltransferase family.</text>
</comment>
<keyword id="KW-0963">Cytoplasm</keyword>
<keyword id="KW-0489">Methyltransferase</keyword>
<keyword id="KW-0949">S-adenosyl-L-methionine</keyword>
<keyword id="KW-0808">Transferase</keyword>
<accession>B8J017</accession>
<evidence type="ECO:0000255" key="1">
    <source>
        <dbReference type="HAMAP-Rule" id="MF_00090"/>
    </source>
</evidence>
<feature type="chain" id="PRO_1000192387" description="Protein-L-isoaspartate O-methyltransferase">
    <location>
        <begin position="1"/>
        <end position="213"/>
    </location>
</feature>
<feature type="active site" evidence="1">
    <location>
        <position position="62"/>
    </location>
</feature>
<gene>
    <name evidence="1" type="primary">pcm</name>
    <name type="ordered locus">Ddes_1190</name>
</gene>